<reference key="1">
    <citation type="journal article" date="2003" name="Fungal Genet. Biol.">
        <title>Characterization of the genomic organization of the region bordering the centromere of chromosome V of Podospora anserina by direct sequencing.</title>
        <authorList>
            <person name="Silar P."/>
            <person name="Barreau C."/>
            <person name="Debuchy R."/>
            <person name="Kicka S."/>
            <person name="Turcq B."/>
            <person name="Sainsard-Chanet A."/>
            <person name="Sellem C.H."/>
            <person name="Billault A."/>
            <person name="Cattolico L."/>
            <person name="Duprat S."/>
            <person name="Weissenbach J."/>
        </authorList>
    </citation>
    <scope>NUCLEOTIDE SEQUENCE [LARGE SCALE GENOMIC DNA]</scope>
    <source>
        <strain>s</strain>
    </source>
</reference>
<organism>
    <name type="scientific">Podospora anserina</name>
    <name type="common">Pleurage anserina</name>
    <dbReference type="NCBI Taxonomy" id="2587412"/>
    <lineage>
        <taxon>Eukaryota</taxon>
        <taxon>Fungi</taxon>
        <taxon>Dikarya</taxon>
        <taxon>Ascomycota</taxon>
        <taxon>Pezizomycotina</taxon>
        <taxon>Sordariomycetes</taxon>
        <taxon>Sordariomycetidae</taxon>
        <taxon>Sordariales</taxon>
        <taxon>Podosporaceae</taxon>
        <taxon>Podospora</taxon>
    </lineage>
</organism>
<protein>
    <recommendedName>
        <fullName>Protein transport protein SEC24</fullName>
    </recommendedName>
</protein>
<feature type="chain" id="PRO_0000295497" description="Protein transport protein SEC24">
    <location>
        <begin position="1"/>
        <end position="946"/>
    </location>
</feature>
<feature type="region of interest" description="Disordered" evidence="2">
    <location>
        <begin position="1"/>
        <end position="52"/>
    </location>
</feature>
<feature type="region of interest" description="Zinc finger-like">
    <location>
        <begin position="270"/>
        <end position="295"/>
    </location>
</feature>
<feature type="compositionally biased region" description="Low complexity" evidence="2">
    <location>
        <begin position="7"/>
        <end position="23"/>
    </location>
</feature>
<feature type="binding site" evidence="1">
    <location>
        <position position="270"/>
    </location>
    <ligand>
        <name>Zn(2+)</name>
        <dbReference type="ChEBI" id="CHEBI:29105"/>
    </ligand>
</feature>
<feature type="binding site" evidence="1">
    <location>
        <position position="273"/>
    </location>
    <ligand>
        <name>Zn(2+)</name>
        <dbReference type="ChEBI" id="CHEBI:29105"/>
    </ligand>
</feature>
<feature type="binding site" evidence="1">
    <location>
        <position position="292"/>
    </location>
    <ligand>
        <name>Zn(2+)</name>
        <dbReference type="ChEBI" id="CHEBI:29105"/>
    </ligand>
</feature>
<feature type="binding site" evidence="1">
    <location>
        <position position="295"/>
    </location>
    <ligand>
        <name>Zn(2+)</name>
        <dbReference type="ChEBI" id="CHEBI:29105"/>
    </ligand>
</feature>
<comment type="function">
    <text evidence="1">Component of the coat protein complex II (COPII) which promotes the formation of transport vesicles from the endoplasmic reticulum (ER). The coat has two main functions, the physical deformation of the endoplasmic reticulum membrane into vesicles and the selection of cargo molecules (By similarity).</text>
</comment>
<comment type="subunit">
    <text evidence="1">The COPII coat is composed of at least 5 proteins: the SEC23/24 complex, the SEC13/31 complex, and the protein SAR1. Golgi apparatus membrane; Peripheral membrane protein; Cytoplasmic side.</text>
</comment>
<comment type="subcellular location">
    <subcellularLocation>
        <location evidence="1">Cytoplasm</location>
    </subcellularLocation>
    <subcellularLocation>
        <location evidence="1">Cytoplasmic vesicle</location>
        <location evidence="1">COPII-coated vesicle membrane</location>
        <topology evidence="1">Peripheral membrane protein</topology>
        <orientation evidence="1">Cytoplasmic side</orientation>
    </subcellularLocation>
    <subcellularLocation>
        <location evidence="1">Endoplasmic reticulum membrane</location>
        <topology evidence="1">Peripheral membrane protein</topology>
        <orientation evidence="1">Cytoplasmic side</orientation>
    </subcellularLocation>
    <subcellularLocation>
        <location evidence="1">Golgi apparatus membrane</location>
        <topology evidence="1">Peripheral membrane protein</topology>
        <orientation evidence="1">Cytoplasmic side</orientation>
    </subcellularLocation>
</comment>
<comment type="similarity">
    <text evidence="3">Belongs to the SEC23/SEC24 family. SEC24 subfamily.</text>
</comment>
<sequence>MSGASNDGYGQYPPQQPGDHQQQPPYPDQAYDNAAPVAPGHAADHGRKKKRQYAASAFDVGVGGNVVAGGQPIPGAAPYGAPAAVPAYGGYPAQPEVQPAAYGAQPAQPYGQPAAVSGYQAPDPYYPSAGAVPAPGGVAGLTAGFQGMNLGAGAPGGIPQQQPQQLPPQARAGPLNQLYPTDLLNQPFNVSELDLPPPPIILPPNASVTPSPDANCLPKYVRSTLNAVPTTHSLLKKSKLPFSLVIQPYAALHDLDDPVPVVQDQVISRCRRCRSYINPFVTFLDHGHRWRCNMCNLTNDVPQAFDWDAAAQKSVDRWQRHELNHAVVEFVAPQEYMVRPPQPLVYLFLFDVSYASVSSGLLATAARTIEASLDRIPNADRRTRLGFMAVDSSLHYFSVPKDTDENGETSMLVVSDLDEPFLPVPGELLVPLTESRRSIENFLTKLPKMFEHNQDNGSCMGSALRAGDKLISPLGGKLVVLSASLPNVGHGKLTMREDKKLLGTSKEGSLLQTAATFYKSFAVECSKNQVSIDMFLFSSQYQDVASLSNLPRYTGGQTWFYPGWNAGRAEDAIKFASEFRDYLSSEIGLEAVLRVRATTGLRMSTFYGNFFTRSSDLCAFPAFPRDQCYVVEVAIDENLTKDVVCMQTAVLHTTCNGERRIRVMTLALPTTTNLADVYASADQAAITTYYTHKAVERALGSGLDSARDLLQKTITDLLQTFKKELAGGSMGGGLQFPSNLRGLPALFLGLMKHVGLRKSAQIPSDLRSAALCLLSTLPVPLLMQYIYPRLYSLHDMPDNAGIPDPETSQIVLPPPLNLSSEKFVPYGLYLIDDGQTQFLWVGREAVPQLLVDVFDVADRTQLQVGKATLKELDNDFNERVRAVIQKSRDHKSKGVGSIIVPHLYIVREDGEPSLKLWAQTLLVEDRADQGLSYVQWMGSLREKVSS</sequence>
<accession>Q86ZK8</accession>
<name>SEC24_PODAS</name>
<gene>
    <name type="primary">SEC24</name>
    <name type="ORF">Pa5D0034</name>
</gene>
<dbReference type="EMBL" id="BX088700">
    <property type="protein sequence ID" value="CAD60721.1"/>
    <property type="molecule type" value="Genomic_DNA"/>
</dbReference>
<dbReference type="SMR" id="Q86ZK8"/>
<dbReference type="VEuPathDB" id="FungiDB:PODANS_5_5670"/>
<dbReference type="GO" id="GO:0030127">
    <property type="term" value="C:COPII vesicle coat"/>
    <property type="evidence" value="ECO:0007669"/>
    <property type="project" value="InterPro"/>
</dbReference>
<dbReference type="GO" id="GO:0070971">
    <property type="term" value="C:endoplasmic reticulum exit site"/>
    <property type="evidence" value="ECO:0007669"/>
    <property type="project" value="TreeGrafter"/>
</dbReference>
<dbReference type="GO" id="GO:0005789">
    <property type="term" value="C:endoplasmic reticulum membrane"/>
    <property type="evidence" value="ECO:0007669"/>
    <property type="project" value="UniProtKB-SubCell"/>
</dbReference>
<dbReference type="GO" id="GO:0000139">
    <property type="term" value="C:Golgi membrane"/>
    <property type="evidence" value="ECO:0007669"/>
    <property type="project" value="UniProtKB-SubCell"/>
</dbReference>
<dbReference type="GO" id="GO:0000149">
    <property type="term" value="F:SNARE binding"/>
    <property type="evidence" value="ECO:0007669"/>
    <property type="project" value="TreeGrafter"/>
</dbReference>
<dbReference type="GO" id="GO:0008270">
    <property type="term" value="F:zinc ion binding"/>
    <property type="evidence" value="ECO:0007669"/>
    <property type="project" value="InterPro"/>
</dbReference>
<dbReference type="GO" id="GO:0090110">
    <property type="term" value="P:COPII-coated vesicle cargo loading"/>
    <property type="evidence" value="ECO:0007669"/>
    <property type="project" value="TreeGrafter"/>
</dbReference>
<dbReference type="GO" id="GO:0006886">
    <property type="term" value="P:intracellular protein transport"/>
    <property type="evidence" value="ECO:0007669"/>
    <property type="project" value="InterPro"/>
</dbReference>
<dbReference type="CDD" id="cd01479">
    <property type="entry name" value="Sec24-like"/>
    <property type="match status" value="1"/>
</dbReference>
<dbReference type="Gene3D" id="2.60.40.1670">
    <property type="entry name" value="beta-sandwich domain of Sec23/24"/>
    <property type="match status" value="1"/>
</dbReference>
<dbReference type="Gene3D" id="1.20.120.730">
    <property type="entry name" value="Sec23/Sec24 helical domain"/>
    <property type="match status" value="1"/>
</dbReference>
<dbReference type="Gene3D" id="3.40.20.10">
    <property type="entry name" value="Severin"/>
    <property type="match status" value="1"/>
</dbReference>
<dbReference type="Gene3D" id="3.40.50.410">
    <property type="entry name" value="von Willebrand factor, type A domain"/>
    <property type="match status" value="1"/>
</dbReference>
<dbReference type="Gene3D" id="2.30.30.380">
    <property type="entry name" value="Zn-finger domain of Sec23/24"/>
    <property type="match status" value="1"/>
</dbReference>
<dbReference type="InterPro" id="IPR029006">
    <property type="entry name" value="ADF-H/Gelsolin-like_dom_sf"/>
</dbReference>
<dbReference type="InterPro" id="IPR007123">
    <property type="entry name" value="Gelsolin-like_dom"/>
</dbReference>
<dbReference type="InterPro" id="IPR036180">
    <property type="entry name" value="Gelsolin-like_dom_sf"/>
</dbReference>
<dbReference type="InterPro" id="IPR006900">
    <property type="entry name" value="Sec23/24_helical_dom"/>
</dbReference>
<dbReference type="InterPro" id="IPR036175">
    <property type="entry name" value="Sec23/24_helical_dom_sf"/>
</dbReference>
<dbReference type="InterPro" id="IPR006896">
    <property type="entry name" value="Sec23/24_trunk_dom"/>
</dbReference>
<dbReference type="InterPro" id="IPR012990">
    <property type="entry name" value="Sec23_24_beta_S"/>
</dbReference>
<dbReference type="InterPro" id="IPR050550">
    <property type="entry name" value="SEC23_SEC24_subfamily"/>
</dbReference>
<dbReference type="InterPro" id="IPR041742">
    <property type="entry name" value="Sec24-like_trunk_dom"/>
</dbReference>
<dbReference type="InterPro" id="IPR036465">
    <property type="entry name" value="vWFA_dom_sf"/>
</dbReference>
<dbReference type="InterPro" id="IPR006895">
    <property type="entry name" value="Znf_Sec23_Sec24"/>
</dbReference>
<dbReference type="InterPro" id="IPR036174">
    <property type="entry name" value="Znf_Sec23_Sec24_sf"/>
</dbReference>
<dbReference type="PANTHER" id="PTHR13803">
    <property type="entry name" value="SEC24-RELATED PROTEIN"/>
    <property type="match status" value="1"/>
</dbReference>
<dbReference type="PANTHER" id="PTHR13803:SF39">
    <property type="entry name" value="SECRETORY 24AB, ISOFORM A"/>
    <property type="match status" value="1"/>
</dbReference>
<dbReference type="Pfam" id="PF00626">
    <property type="entry name" value="Gelsolin"/>
    <property type="match status" value="1"/>
</dbReference>
<dbReference type="Pfam" id="PF08033">
    <property type="entry name" value="Sec23_BS"/>
    <property type="match status" value="1"/>
</dbReference>
<dbReference type="Pfam" id="PF04815">
    <property type="entry name" value="Sec23_helical"/>
    <property type="match status" value="1"/>
</dbReference>
<dbReference type="Pfam" id="PF04811">
    <property type="entry name" value="Sec23_trunk"/>
    <property type="match status" value="1"/>
</dbReference>
<dbReference type="Pfam" id="PF04810">
    <property type="entry name" value="zf-Sec23_Sec24"/>
    <property type="match status" value="1"/>
</dbReference>
<dbReference type="SUPFAM" id="SSF81995">
    <property type="entry name" value="beta-sandwich domain of Sec23/24"/>
    <property type="match status" value="1"/>
</dbReference>
<dbReference type="SUPFAM" id="SSF82754">
    <property type="entry name" value="C-terminal, gelsolin-like domain of Sec23/24"/>
    <property type="match status" value="1"/>
</dbReference>
<dbReference type="SUPFAM" id="SSF81811">
    <property type="entry name" value="Helical domain of Sec23/24"/>
    <property type="match status" value="1"/>
</dbReference>
<dbReference type="SUPFAM" id="SSF53300">
    <property type="entry name" value="vWA-like"/>
    <property type="match status" value="1"/>
</dbReference>
<dbReference type="SUPFAM" id="SSF82919">
    <property type="entry name" value="Zn-finger domain of Sec23/24"/>
    <property type="match status" value="1"/>
</dbReference>
<keyword id="KW-0963">Cytoplasm</keyword>
<keyword id="KW-0968">Cytoplasmic vesicle</keyword>
<keyword id="KW-0256">Endoplasmic reticulum</keyword>
<keyword id="KW-0931">ER-Golgi transport</keyword>
<keyword id="KW-0333">Golgi apparatus</keyword>
<keyword id="KW-0472">Membrane</keyword>
<keyword id="KW-0479">Metal-binding</keyword>
<keyword id="KW-0653">Protein transport</keyword>
<keyword id="KW-0813">Transport</keyword>
<keyword id="KW-0862">Zinc</keyword>
<proteinExistence type="inferred from homology"/>
<evidence type="ECO:0000250" key="1"/>
<evidence type="ECO:0000256" key="2">
    <source>
        <dbReference type="SAM" id="MobiDB-lite"/>
    </source>
</evidence>
<evidence type="ECO:0000305" key="3"/>